<dbReference type="EMBL" id="D17510">
    <property type="protein sequence ID" value="BAA04451.1"/>
    <property type="molecule type" value="Genomic_DNA"/>
</dbReference>
<dbReference type="PIR" id="T07575">
    <property type="entry name" value="T07575"/>
</dbReference>
<dbReference type="RefSeq" id="NP_042496.1">
    <property type="nucleotide sequence ID" value="NC_001631.1"/>
</dbReference>
<dbReference type="SMR" id="P41651"/>
<dbReference type="GeneID" id="808997"/>
<dbReference type="GO" id="GO:0009507">
    <property type="term" value="C:chloroplast"/>
    <property type="evidence" value="ECO:0007669"/>
    <property type="project" value="UniProtKB-SubCell"/>
</dbReference>
<dbReference type="GO" id="GO:0015934">
    <property type="term" value="C:large ribosomal subunit"/>
    <property type="evidence" value="ECO:0007669"/>
    <property type="project" value="InterPro"/>
</dbReference>
<dbReference type="GO" id="GO:0003735">
    <property type="term" value="F:structural constituent of ribosome"/>
    <property type="evidence" value="ECO:0007669"/>
    <property type="project" value="InterPro"/>
</dbReference>
<dbReference type="GO" id="GO:0006412">
    <property type="term" value="P:translation"/>
    <property type="evidence" value="ECO:0007669"/>
    <property type="project" value="UniProtKB-UniRule"/>
</dbReference>
<dbReference type="HAMAP" id="MF_00340">
    <property type="entry name" value="Ribosomal_bL32"/>
    <property type="match status" value="1"/>
</dbReference>
<dbReference type="InterPro" id="IPR002677">
    <property type="entry name" value="Ribosomal_bL32"/>
</dbReference>
<dbReference type="InterPro" id="IPR044958">
    <property type="entry name" value="Ribosomal_bL32_plant/cyanobact"/>
</dbReference>
<dbReference type="PANTHER" id="PTHR36083">
    <property type="entry name" value="50S RIBOSOMAL PROTEIN L32, CHLOROPLASTIC"/>
    <property type="match status" value="1"/>
</dbReference>
<dbReference type="PANTHER" id="PTHR36083:SF1">
    <property type="entry name" value="LARGE RIBOSOMAL SUBUNIT PROTEIN BL32C"/>
    <property type="match status" value="1"/>
</dbReference>
<dbReference type="Pfam" id="PF01783">
    <property type="entry name" value="Ribosomal_L32p"/>
    <property type="match status" value="1"/>
</dbReference>
<geneLocation type="chloroplast"/>
<feature type="initiator methionine" description="Removed" evidence="1">
    <location>
        <position position="1"/>
    </location>
</feature>
<feature type="chain" id="PRO_0000172474" description="Large ribosomal subunit protein bL32c">
    <location>
        <begin position="2"/>
        <end position="70"/>
    </location>
</feature>
<feature type="region of interest" description="Disordered" evidence="2">
    <location>
        <begin position="1"/>
        <end position="20"/>
    </location>
</feature>
<feature type="region of interest" description="Disordered" evidence="2">
    <location>
        <begin position="51"/>
        <end position="70"/>
    </location>
</feature>
<feature type="compositionally biased region" description="Polar residues" evidence="2">
    <location>
        <begin position="52"/>
        <end position="61"/>
    </location>
</feature>
<organism>
    <name type="scientific">Pinus thunbergii</name>
    <name type="common">Japanese black pine</name>
    <name type="synonym">Pinus thunbergiana</name>
    <dbReference type="NCBI Taxonomy" id="3350"/>
    <lineage>
        <taxon>Eukaryota</taxon>
        <taxon>Viridiplantae</taxon>
        <taxon>Streptophyta</taxon>
        <taxon>Embryophyta</taxon>
        <taxon>Tracheophyta</taxon>
        <taxon>Spermatophyta</taxon>
        <taxon>Pinopsida</taxon>
        <taxon>Pinidae</taxon>
        <taxon>Conifers I</taxon>
        <taxon>Pinales</taxon>
        <taxon>Pinaceae</taxon>
        <taxon>Pinus</taxon>
        <taxon>Pinus subgen. Pinus</taxon>
    </lineage>
</organism>
<protein>
    <recommendedName>
        <fullName evidence="3">Large ribosomal subunit protein bL32c</fullName>
    </recommendedName>
    <alternativeName>
        <fullName>50S ribosomal protein L32, chloroplastic</fullName>
    </alternativeName>
</protein>
<evidence type="ECO:0000250" key="1"/>
<evidence type="ECO:0000256" key="2">
    <source>
        <dbReference type="SAM" id="MobiDB-lite"/>
    </source>
</evidence>
<evidence type="ECO:0000305" key="3"/>
<gene>
    <name type="primary">rpl32</name>
</gene>
<keyword id="KW-0150">Chloroplast</keyword>
<keyword id="KW-0934">Plastid</keyword>
<keyword id="KW-0687">Ribonucleoprotein</keyword>
<keyword id="KW-0689">Ribosomal protein</keyword>
<sequence length="70" mass="7676">MAVPKKRTSRSKKKIRKNVRKGKAYRAAIKAFSLAKSISTGHSKSFYCIVNDDSSGSSESKLTAIDLDDP</sequence>
<proteinExistence type="inferred from homology"/>
<name>RK32_PINTH</name>
<reference key="1">
    <citation type="journal article" date="1994" name="Proc. Natl. Acad. Sci. U.S.A.">
        <title>Loss of all ndh genes as determined by sequencing the entire chloroplast genome of the black pine Pinus thunbergii.</title>
        <authorList>
            <person name="Wakasugi T."/>
            <person name="Tsudzuki J."/>
            <person name="Ito S."/>
            <person name="Nakashima K."/>
            <person name="Tsudzuki T."/>
            <person name="Sugiura M."/>
        </authorList>
    </citation>
    <scope>NUCLEOTIDE SEQUENCE [LARGE SCALE GENOMIC DNA]</scope>
</reference>
<comment type="subcellular location">
    <subcellularLocation>
        <location>Plastid</location>
        <location>Chloroplast</location>
    </subcellularLocation>
</comment>
<comment type="similarity">
    <text evidence="3">Belongs to the bacterial ribosomal protein bL32 family.</text>
</comment>
<accession>P41651</accession>